<accession>Q5ZRF4</accession>
<organism>
    <name type="scientific">Legionella pneumophila subsp. pneumophila (strain Philadelphia 1 / ATCC 33152 / DSM 7513)</name>
    <dbReference type="NCBI Taxonomy" id="272624"/>
    <lineage>
        <taxon>Bacteria</taxon>
        <taxon>Pseudomonadati</taxon>
        <taxon>Pseudomonadota</taxon>
        <taxon>Gammaproteobacteria</taxon>
        <taxon>Legionellales</taxon>
        <taxon>Legionellaceae</taxon>
        <taxon>Legionella</taxon>
    </lineage>
</organism>
<name>RSMA_LEGPH</name>
<reference key="1">
    <citation type="journal article" date="2004" name="Science">
        <title>The genomic sequence of the accidental pathogen Legionella pneumophila.</title>
        <authorList>
            <person name="Chien M."/>
            <person name="Morozova I."/>
            <person name="Shi S."/>
            <person name="Sheng H."/>
            <person name="Chen J."/>
            <person name="Gomez S.M."/>
            <person name="Asamani G."/>
            <person name="Hill K."/>
            <person name="Nuara J."/>
            <person name="Feder M."/>
            <person name="Rineer J."/>
            <person name="Greenberg J.J."/>
            <person name="Steshenko V."/>
            <person name="Park S.H."/>
            <person name="Zhao B."/>
            <person name="Teplitskaya E."/>
            <person name="Edwards J.R."/>
            <person name="Pampou S."/>
            <person name="Georghiou A."/>
            <person name="Chou I.-C."/>
            <person name="Iannuccilli W."/>
            <person name="Ulz M.E."/>
            <person name="Kim D.H."/>
            <person name="Geringer-Sameth A."/>
            <person name="Goldsberry C."/>
            <person name="Morozov P."/>
            <person name="Fischer S.G."/>
            <person name="Segal G."/>
            <person name="Qu X."/>
            <person name="Rzhetsky A."/>
            <person name="Zhang P."/>
            <person name="Cayanis E."/>
            <person name="De Jong P.J."/>
            <person name="Ju J."/>
            <person name="Kalachikov S."/>
            <person name="Shuman H.A."/>
            <person name="Russo J.J."/>
        </authorList>
    </citation>
    <scope>NUCLEOTIDE SEQUENCE [LARGE SCALE GENOMIC DNA]</scope>
    <source>
        <strain>Philadelphia 1 / ATCC 33152 / DSM 7513</strain>
    </source>
</reference>
<proteinExistence type="inferred from homology"/>
<gene>
    <name evidence="1" type="primary">rsmA</name>
    <name evidence="1" type="synonym">ksgA</name>
    <name type="ordered locus">lpg2928</name>
</gene>
<dbReference type="EC" id="2.1.1.182" evidence="1"/>
<dbReference type="EMBL" id="AE017354">
    <property type="protein sequence ID" value="AAU28974.1"/>
    <property type="molecule type" value="Genomic_DNA"/>
</dbReference>
<dbReference type="RefSeq" id="WP_010948613.1">
    <property type="nucleotide sequence ID" value="NC_002942.5"/>
</dbReference>
<dbReference type="RefSeq" id="YP_096921.1">
    <property type="nucleotide sequence ID" value="NC_002942.5"/>
</dbReference>
<dbReference type="SMR" id="Q5ZRF4"/>
<dbReference type="STRING" id="272624.lpg2928"/>
<dbReference type="PaxDb" id="272624-lpg2928"/>
<dbReference type="GeneID" id="57036931"/>
<dbReference type="KEGG" id="lpn:lpg2928"/>
<dbReference type="PATRIC" id="fig|272624.6.peg.3126"/>
<dbReference type="eggNOG" id="COG0030">
    <property type="taxonomic scope" value="Bacteria"/>
</dbReference>
<dbReference type="HOGENOM" id="CLU_041220_0_1_6"/>
<dbReference type="OrthoDB" id="9814755at2"/>
<dbReference type="Proteomes" id="UP000000609">
    <property type="component" value="Chromosome"/>
</dbReference>
<dbReference type="GO" id="GO:0005829">
    <property type="term" value="C:cytosol"/>
    <property type="evidence" value="ECO:0007669"/>
    <property type="project" value="TreeGrafter"/>
</dbReference>
<dbReference type="GO" id="GO:0052908">
    <property type="term" value="F:16S rRNA (adenine(1518)-N(6)/adenine(1519)-N(6))-dimethyltransferase activity"/>
    <property type="evidence" value="ECO:0007669"/>
    <property type="project" value="UniProtKB-EC"/>
</dbReference>
<dbReference type="GO" id="GO:0003723">
    <property type="term" value="F:RNA binding"/>
    <property type="evidence" value="ECO:0007669"/>
    <property type="project" value="UniProtKB-KW"/>
</dbReference>
<dbReference type="FunFam" id="1.10.8.100:FF:000001">
    <property type="entry name" value="Ribosomal RNA small subunit methyltransferase A"/>
    <property type="match status" value="1"/>
</dbReference>
<dbReference type="Gene3D" id="1.10.8.100">
    <property type="entry name" value="Ribosomal RNA adenine dimethylase-like, domain 2"/>
    <property type="match status" value="1"/>
</dbReference>
<dbReference type="Gene3D" id="3.40.50.150">
    <property type="entry name" value="Vaccinia Virus protein VP39"/>
    <property type="match status" value="1"/>
</dbReference>
<dbReference type="HAMAP" id="MF_00607">
    <property type="entry name" value="16SrRNA_methyltr_A"/>
    <property type="match status" value="1"/>
</dbReference>
<dbReference type="InterPro" id="IPR001737">
    <property type="entry name" value="KsgA/Erm"/>
</dbReference>
<dbReference type="InterPro" id="IPR023165">
    <property type="entry name" value="rRNA_Ade_diMease-like_C"/>
</dbReference>
<dbReference type="InterPro" id="IPR020596">
    <property type="entry name" value="rRNA_Ade_Mease_Trfase_CS"/>
</dbReference>
<dbReference type="InterPro" id="IPR020598">
    <property type="entry name" value="rRNA_Ade_methylase_Trfase_N"/>
</dbReference>
<dbReference type="InterPro" id="IPR011530">
    <property type="entry name" value="rRNA_adenine_dimethylase"/>
</dbReference>
<dbReference type="InterPro" id="IPR029063">
    <property type="entry name" value="SAM-dependent_MTases_sf"/>
</dbReference>
<dbReference type="NCBIfam" id="TIGR00755">
    <property type="entry name" value="ksgA"/>
    <property type="match status" value="1"/>
</dbReference>
<dbReference type="PANTHER" id="PTHR11727">
    <property type="entry name" value="DIMETHYLADENOSINE TRANSFERASE"/>
    <property type="match status" value="1"/>
</dbReference>
<dbReference type="PANTHER" id="PTHR11727:SF7">
    <property type="entry name" value="DIMETHYLADENOSINE TRANSFERASE-RELATED"/>
    <property type="match status" value="1"/>
</dbReference>
<dbReference type="Pfam" id="PF00398">
    <property type="entry name" value="RrnaAD"/>
    <property type="match status" value="1"/>
</dbReference>
<dbReference type="SMART" id="SM00650">
    <property type="entry name" value="rADc"/>
    <property type="match status" value="1"/>
</dbReference>
<dbReference type="SUPFAM" id="SSF53335">
    <property type="entry name" value="S-adenosyl-L-methionine-dependent methyltransferases"/>
    <property type="match status" value="1"/>
</dbReference>
<dbReference type="PROSITE" id="PS01131">
    <property type="entry name" value="RRNA_A_DIMETH"/>
    <property type="match status" value="1"/>
</dbReference>
<dbReference type="PROSITE" id="PS51689">
    <property type="entry name" value="SAM_RNA_A_N6_MT"/>
    <property type="match status" value="1"/>
</dbReference>
<sequence>MRHSPRKRFGQNFLQDKYIINEILRAINPLADDNMLEIGPGLGALTQPLLQKLNQLTAIEIDTDLQSYLTCLPASQGKLNLIPADALTVDFCQFGPHLRVVGNLPYNISTPLLIYLLKFITCIDDMHFMLQKEVVERIAAAHGTKAYGRLSVMLQYHCEVEYLFDVPPEAFEPRPKVDSAIVRLTPYRVSPFESVNTEKLENIVAKAFAMRRKTLTNNLKGIISLSQLNDLGIDGGKRPEQISVAEYVQLAKFISN</sequence>
<protein>
    <recommendedName>
        <fullName evidence="1">Ribosomal RNA small subunit methyltransferase A</fullName>
        <ecNumber evidence="1">2.1.1.182</ecNumber>
    </recommendedName>
    <alternativeName>
        <fullName evidence="1">16S rRNA (adenine(1518)-N(6)/adenine(1519)-N(6))-dimethyltransferase</fullName>
    </alternativeName>
    <alternativeName>
        <fullName evidence="1">16S rRNA dimethyladenosine transferase</fullName>
    </alternativeName>
    <alternativeName>
        <fullName evidence="1">16S rRNA dimethylase</fullName>
    </alternativeName>
    <alternativeName>
        <fullName evidence="1">S-adenosylmethionine-6-N', N'-adenosyl(rRNA) dimethyltransferase</fullName>
    </alternativeName>
</protein>
<comment type="function">
    <text evidence="1">Specifically dimethylates two adjacent adenosines (A1518 and A1519) in the loop of a conserved hairpin near the 3'-end of 16S rRNA in the 30S particle. May play a critical role in biogenesis of 30S subunits.</text>
</comment>
<comment type="catalytic activity">
    <reaction evidence="1">
        <text>adenosine(1518)/adenosine(1519) in 16S rRNA + 4 S-adenosyl-L-methionine = N(6)-dimethyladenosine(1518)/N(6)-dimethyladenosine(1519) in 16S rRNA + 4 S-adenosyl-L-homocysteine + 4 H(+)</text>
        <dbReference type="Rhea" id="RHEA:19609"/>
        <dbReference type="Rhea" id="RHEA-COMP:10232"/>
        <dbReference type="Rhea" id="RHEA-COMP:10233"/>
        <dbReference type="ChEBI" id="CHEBI:15378"/>
        <dbReference type="ChEBI" id="CHEBI:57856"/>
        <dbReference type="ChEBI" id="CHEBI:59789"/>
        <dbReference type="ChEBI" id="CHEBI:74411"/>
        <dbReference type="ChEBI" id="CHEBI:74493"/>
        <dbReference type="EC" id="2.1.1.182"/>
    </reaction>
</comment>
<comment type="subcellular location">
    <subcellularLocation>
        <location evidence="1">Cytoplasm</location>
    </subcellularLocation>
</comment>
<comment type="similarity">
    <text evidence="1">Belongs to the class I-like SAM-binding methyltransferase superfamily. rRNA adenine N(6)-methyltransferase family. RsmA subfamily.</text>
</comment>
<feature type="chain" id="PRO_0000101548" description="Ribosomal RNA small subunit methyltransferase A">
    <location>
        <begin position="1"/>
        <end position="256"/>
    </location>
</feature>
<feature type="binding site" evidence="1">
    <location>
        <position position="12"/>
    </location>
    <ligand>
        <name>S-adenosyl-L-methionine</name>
        <dbReference type="ChEBI" id="CHEBI:59789"/>
    </ligand>
</feature>
<feature type="binding site" evidence="1">
    <location>
        <position position="14"/>
    </location>
    <ligand>
        <name>S-adenosyl-L-methionine</name>
        <dbReference type="ChEBI" id="CHEBI:59789"/>
    </ligand>
</feature>
<feature type="binding site" evidence="1">
    <location>
        <position position="39"/>
    </location>
    <ligand>
        <name>S-adenosyl-L-methionine</name>
        <dbReference type="ChEBI" id="CHEBI:59789"/>
    </ligand>
</feature>
<feature type="binding site" evidence="1">
    <location>
        <position position="60"/>
    </location>
    <ligand>
        <name>S-adenosyl-L-methionine</name>
        <dbReference type="ChEBI" id="CHEBI:59789"/>
    </ligand>
</feature>
<feature type="binding site" evidence="1">
    <location>
        <position position="85"/>
    </location>
    <ligand>
        <name>S-adenosyl-L-methionine</name>
        <dbReference type="ChEBI" id="CHEBI:59789"/>
    </ligand>
</feature>
<feature type="binding site" evidence="1">
    <location>
        <position position="103"/>
    </location>
    <ligand>
        <name>S-adenosyl-L-methionine</name>
        <dbReference type="ChEBI" id="CHEBI:59789"/>
    </ligand>
</feature>
<evidence type="ECO:0000255" key="1">
    <source>
        <dbReference type="HAMAP-Rule" id="MF_00607"/>
    </source>
</evidence>
<keyword id="KW-0963">Cytoplasm</keyword>
<keyword id="KW-0489">Methyltransferase</keyword>
<keyword id="KW-1185">Reference proteome</keyword>
<keyword id="KW-0694">RNA-binding</keyword>
<keyword id="KW-0698">rRNA processing</keyword>
<keyword id="KW-0949">S-adenosyl-L-methionine</keyword>
<keyword id="KW-0808">Transferase</keyword>